<proteinExistence type="inferred from homology"/>
<dbReference type="EMBL" id="CR555306">
    <property type="protein sequence ID" value="CAI10185.1"/>
    <property type="molecule type" value="Genomic_DNA"/>
</dbReference>
<dbReference type="RefSeq" id="WP_011239830.1">
    <property type="nucleotide sequence ID" value="NC_006513.1"/>
</dbReference>
<dbReference type="SMR" id="Q5NXM9"/>
<dbReference type="STRING" id="76114.ebA7158"/>
<dbReference type="KEGG" id="eba:ebA7158"/>
<dbReference type="eggNOG" id="COG1295">
    <property type="taxonomic scope" value="Bacteria"/>
</dbReference>
<dbReference type="HOGENOM" id="CLU_032288_1_0_4"/>
<dbReference type="OrthoDB" id="9808671at2"/>
<dbReference type="Proteomes" id="UP000006552">
    <property type="component" value="Chromosome"/>
</dbReference>
<dbReference type="GO" id="GO:0005886">
    <property type="term" value="C:plasma membrane"/>
    <property type="evidence" value="ECO:0007669"/>
    <property type="project" value="UniProtKB-SubCell"/>
</dbReference>
<dbReference type="HAMAP" id="MF_00672">
    <property type="entry name" value="UPF0761"/>
    <property type="match status" value="1"/>
</dbReference>
<dbReference type="InterPro" id="IPR023679">
    <property type="entry name" value="UPF0761_bac"/>
</dbReference>
<dbReference type="InterPro" id="IPR017039">
    <property type="entry name" value="Virul_fac_BrkB"/>
</dbReference>
<dbReference type="NCBIfam" id="TIGR00765">
    <property type="entry name" value="yihY_not_rbn"/>
    <property type="match status" value="1"/>
</dbReference>
<dbReference type="PANTHER" id="PTHR30213">
    <property type="entry name" value="INNER MEMBRANE PROTEIN YHJD"/>
    <property type="match status" value="1"/>
</dbReference>
<dbReference type="PANTHER" id="PTHR30213:SF0">
    <property type="entry name" value="UPF0761 MEMBRANE PROTEIN YIHY"/>
    <property type="match status" value="1"/>
</dbReference>
<dbReference type="Pfam" id="PF03631">
    <property type="entry name" value="Virul_fac_BrkB"/>
    <property type="match status" value="1"/>
</dbReference>
<feature type="chain" id="PRO_0000391021" description="UPF0761 membrane protein AZOSEA40600">
    <location>
        <begin position="1"/>
        <end position="407"/>
    </location>
</feature>
<feature type="transmembrane region" description="Helical" evidence="1">
    <location>
        <begin position="29"/>
        <end position="49"/>
    </location>
</feature>
<feature type="transmembrane region" description="Helical" evidence="1">
    <location>
        <begin position="92"/>
        <end position="112"/>
    </location>
</feature>
<feature type="transmembrane region" description="Helical" evidence="1">
    <location>
        <begin position="132"/>
        <end position="152"/>
    </location>
</feature>
<feature type="transmembrane region" description="Helical" evidence="1">
    <location>
        <begin position="174"/>
        <end position="194"/>
    </location>
</feature>
<feature type="transmembrane region" description="Helical" evidence="1">
    <location>
        <begin position="207"/>
        <end position="227"/>
    </location>
</feature>
<feature type="transmembrane region" description="Helical" evidence="1">
    <location>
        <begin position="239"/>
        <end position="259"/>
    </location>
</feature>
<reference key="1">
    <citation type="journal article" date="2005" name="Arch. Microbiol.">
        <title>The genome sequence of an anaerobic aromatic-degrading denitrifying bacterium, strain EbN1.</title>
        <authorList>
            <person name="Rabus R."/>
            <person name="Kube M."/>
            <person name="Heider J."/>
            <person name="Beck A."/>
            <person name="Heitmann K."/>
            <person name="Widdel F."/>
            <person name="Reinhardt R."/>
        </authorList>
    </citation>
    <scope>NUCLEOTIDE SEQUENCE [LARGE SCALE GENOMIC DNA]</scope>
    <source>
        <strain>DSM 19018 / LMG 30748 / EbN1</strain>
    </source>
</reference>
<comment type="subcellular location">
    <subcellularLocation>
        <location evidence="1">Cell inner membrane</location>
        <topology evidence="1">Multi-pass membrane protein</topology>
    </subcellularLocation>
</comment>
<comment type="similarity">
    <text evidence="1">Belongs to the UPF0761 family.</text>
</comment>
<accession>Q5NXM9</accession>
<sequence>MMPLTAAREFMRLLTGRFLATRCPQVAGSLAFTTLLAIVPLLTVIIALFSNFPAFSRLGESLRTFLLENLLPDRAGQIIATYAFQFSQQAAGLTLIGTVLLVLTALMLLMTIDHVFNHIWGVRRPRPLLTRLMVHWFALTLGPLALGGSVLATGHLVATSIALAGEGSWVGATFARLVPTVLLGSLFSVLYYAVPNHPVRMLHALAGGIAAAIVFVLMQRLFGLFIVRIPTYTLIYGTFAVLPIFLVWLYLSWVVILLGAALSATLPSFFERARILRAFPGDRAWAAVTMLIALADAQHAGTTLPFATLQAGARVSSNEGEALLGEMRDAGWVAHTEEGNWLLSRQAAQIGLAAVVNRFALSPAAWREASDGDEASRRIAERLATALHSADLPLSALTSAGNRVQTG</sequence>
<name>Y4060_AROAE</name>
<protein>
    <recommendedName>
        <fullName evidence="1">UPF0761 membrane protein AZOSEA40600</fullName>
    </recommendedName>
</protein>
<evidence type="ECO:0000255" key="1">
    <source>
        <dbReference type="HAMAP-Rule" id="MF_00672"/>
    </source>
</evidence>
<organism>
    <name type="scientific">Aromatoleum aromaticum (strain DSM 19018 / LMG 30748 / EbN1)</name>
    <name type="common">Azoarcus sp. (strain EbN1)</name>
    <dbReference type="NCBI Taxonomy" id="76114"/>
    <lineage>
        <taxon>Bacteria</taxon>
        <taxon>Pseudomonadati</taxon>
        <taxon>Pseudomonadota</taxon>
        <taxon>Betaproteobacteria</taxon>
        <taxon>Rhodocyclales</taxon>
        <taxon>Rhodocyclaceae</taxon>
        <taxon>Aromatoleum</taxon>
    </lineage>
</organism>
<gene>
    <name type="ordered locus">AZOSEA40600</name>
    <name type="ORF">ebA7158</name>
</gene>
<keyword id="KW-0997">Cell inner membrane</keyword>
<keyword id="KW-1003">Cell membrane</keyword>
<keyword id="KW-0472">Membrane</keyword>
<keyword id="KW-1185">Reference proteome</keyword>
<keyword id="KW-0812">Transmembrane</keyword>
<keyword id="KW-1133">Transmembrane helix</keyword>